<evidence type="ECO:0000255" key="1">
    <source>
        <dbReference type="PROSITE-ProRule" id="PRU00037"/>
    </source>
</evidence>
<evidence type="ECO:0000255" key="2">
    <source>
        <dbReference type="PROSITE-ProRule" id="PRU00042"/>
    </source>
</evidence>
<evidence type="ECO:0000256" key="3">
    <source>
        <dbReference type="SAM" id="MobiDB-lite"/>
    </source>
</evidence>
<evidence type="ECO:0000269" key="4">
    <source ref="1"/>
</evidence>
<evidence type="ECO:0000303" key="5">
    <source>
    </source>
</evidence>
<evidence type="ECO:0000303" key="6">
    <source>
    </source>
</evidence>
<evidence type="ECO:0000303" key="7">
    <source ref="1"/>
</evidence>
<evidence type="ECO:0000305" key="8"/>
<evidence type="ECO:0007744" key="9">
    <source>
    </source>
</evidence>
<evidence type="ECO:0007744" key="10">
    <source>
    </source>
</evidence>
<evidence type="ECO:0007744" key="11">
    <source>
    </source>
</evidence>
<evidence type="ECO:0007744" key="12">
    <source>
    </source>
</evidence>
<evidence type="ECO:0007744" key="13">
    <source>
    </source>
</evidence>
<evidence type="ECO:0007744" key="14">
    <source>
    </source>
</evidence>
<evidence type="ECO:0007744" key="15">
    <source>
    </source>
</evidence>
<evidence type="ECO:0007744" key="16">
    <source>
    </source>
</evidence>
<evidence type="ECO:0007829" key="17">
    <source>
        <dbReference type="PDB" id="8GN3"/>
    </source>
</evidence>
<evidence type="ECO:0007829" key="18">
    <source>
        <dbReference type="PDB" id="8GN4"/>
    </source>
</evidence>
<organism>
    <name type="scientific">Homo sapiens</name>
    <name type="common">Human</name>
    <dbReference type="NCBI Taxonomy" id="9606"/>
    <lineage>
        <taxon>Eukaryota</taxon>
        <taxon>Metazoa</taxon>
        <taxon>Chordata</taxon>
        <taxon>Craniata</taxon>
        <taxon>Vertebrata</taxon>
        <taxon>Euteleostomi</taxon>
        <taxon>Mammalia</taxon>
        <taxon>Eutheria</taxon>
        <taxon>Euarchontoglires</taxon>
        <taxon>Primates</taxon>
        <taxon>Haplorrhini</taxon>
        <taxon>Catarrhini</taxon>
        <taxon>Hominidae</taxon>
        <taxon>Homo</taxon>
    </lineage>
</organism>
<dbReference type="EMBL" id="AJ319673">
    <property type="protein sequence ID" value="CAC40989.1"/>
    <property type="molecule type" value="mRNA"/>
</dbReference>
<dbReference type="EMBL" id="AJ507398">
    <property type="protein sequence ID" value="CAD45447.1"/>
    <property type="molecule type" value="Genomic_DNA"/>
</dbReference>
<dbReference type="EMBL" id="AK056913">
    <property type="protein sequence ID" value="BAB71309.1"/>
    <property type="molecule type" value="mRNA"/>
</dbReference>
<dbReference type="EMBL" id="AC009812">
    <property type="status" value="NOT_ANNOTATED_CDS"/>
    <property type="molecule type" value="Genomic_DNA"/>
</dbReference>
<dbReference type="EMBL" id="BC050061">
    <property type="protein sequence ID" value="AAH50061.1"/>
    <property type="molecule type" value="mRNA"/>
</dbReference>
<dbReference type="EMBL" id="BC127098">
    <property type="protein sequence ID" value="AAI27099.1"/>
    <property type="molecule type" value="mRNA"/>
</dbReference>
<dbReference type="CCDS" id="CCDS47880.1">
    <molecule id="Q96DT7-1"/>
</dbReference>
<dbReference type="CCDS" id="CCDS64920.1">
    <molecule id="Q96DT7-4"/>
</dbReference>
<dbReference type="RefSeq" id="NP_001099009.1">
    <molecule id="Q96DT7-1"/>
    <property type="nucleotide sequence ID" value="NM_001105539.3"/>
</dbReference>
<dbReference type="RefSeq" id="NP_001264074.1">
    <molecule id="Q96DT7-4"/>
    <property type="nucleotide sequence ID" value="NM_001277145.2"/>
</dbReference>
<dbReference type="RefSeq" id="NP_076418.3">
    <molecule id="Q96DT7-2"/>
    <property type="nucleotide sequence ID" value="NM_023929.4"/>
</dbReference>
<dbReference type="PDB" id="8GN3">
    <property type="method" value="X-ray"/>
    <property type="resolution" value="1.80 A"/>
    <property type="chains" value="A/B=713-779"/>
</dbReference>
<dbReference type="PDB" id="8GN4">
    <property type="method" value="X-ray"/>
    <property type="resolution" value="1.90 A"/>
    <property type="chains" value="A=713-779"/>
</dbReference>
<dbReference type="PDBsum" id="8GN3"/>
<dbReference type="PDBsum" id="8GN4"/>
<dbReference type="SMR" id="Q96DT7"/>
<dbReference type="BioGRID" id="122435">
    <property type="interactions" value="148"/>
</dbReference>
<dbReference type="FunCoup" id="Q96DT7">
    <property type="interactions" value="2458"/>
</dbReference>
<dbReference type="IntAct" id="Q96DT7">
    <property type="interactions" value="81"/>
</dbReference>
<dbReference type="MINT" id="Q96DT7"/>
<dbReference type="STRING" id="9606.ENSP00000387462"/>
<dbReference type="ChEMBL" id="CHEMBL5069372"/>
<dbReference type="iPTMnet" id="Q96DT7"/>
<dbReference type="PhosphoSitePlus" id="Q96DT7"/>
<dbReference type="BioMuta" id="ZBTB10"/>
<dbReference type="DMDM" id="317373300"/>
<dbReference type="jPOST" id="Q96DT7"/>
<dbReference type="MassIVE" id="Q96DT7"/>
<dbReference type="PaxDb" id="9606-ENSP00000387462"/>
<dbReference type="PeptideAtlas" id="Q96DT7"/>
<dbReference type="ProteomicsDB" id="76321">
    <molecule id="Q96DT7-1"/>
</dbReference>
<dbReference type="ProteomicsDB" id="76322">
    <molecule id="Q96DT7-2"/>
</dbReference>
<dbReference type="ProteomicsDB" id="76323">
    <molecule id="Q96DT7-3"/>
</dbReference>
<dbReference type="ProteomicsDB" id="76324">
    <molecule id="Q96DT7-4"/>
</dbReference>
<dbReference type="Pumba" id="Q96DT7"/>
<dbReference type="Antibodypedia" id="6507">
    <property type="antibodies" value="125 antibodies from 22 providers"/>
</dbReference>
<dbReference type="DNASU" id="65986"/>
<dbReference type="Ensembl" id="ENST00000379091.8">
    <molecule id="Q96DT7-4"/>
    <property type="protein sequence ID" value="ENSP00000368384.4"/>
    <property type="gene ID" value="ENSG00000205189.13"/>
</dbReference>
<dbReference type="Ensembl" id="ENST00000426744.5">
    <molecule id="Q96DT7-2"/>
    <property type="protein sequence ID" value="ENSP00000416134.2"/>
    <property type="gene ID" value="ENSG00000205189.13"/>
</dbReference>
<dbReference type="Ensembl" id="ENST00000430430.5">
    <molecule id="Q96DT7-1"/>
    <property type="protein sequence ID" value="ENSP00000387462.1"/>
    <property type="gene ID" value="ENSG00000205189.13"/>
</dbReference>
<dbReference type="Ensembl" id="ENST00000455036.8">
    <molecule id="Q96DT7-1"/>
    <property type="protein sequence ID" value="ENSP00000412036.3"/>
    <property type="gene ID" value="ENSG00000205189.13"/>
</dbReference>
<dbReference type="GeneID" id="65986"/>
<dbReference type="KEGG" id="hsa:65986"/>
<dbReference type="MANE-Select" id="ENST00000455036.8">
    <property type="protein sequence ID" value="ENSP00000412036.3"/>
    <property type="RefSeq nucleotide sequence ID" value="NM_001105539.3"/>
    <property type="RefSeq protein sequence ID" value="NP_001099009.1"/>
</dbReference>
<dbReference type="UCSC" id="uc003ybv.6">
    <molecule id="Q96DT7-1"/>
    <property type="organism name" value="human"/>
</dbReference>
<dbReference type="AGR" id="HGNC:30953"/>
<dbReference type="CTD" id="65986"/>
<dbReference type="DisGeNET" id="65986"/>
<dbReference type="GeneCards" id="ZBTB10"/>
<dbReference type="HGNC" id="HGNC:30953">
    <property type="gene designation" value="ZBTB10"/>
</dbReference>
<dbReference type="HPA" id="ENSG00000205189">
    <property type="expression patterns" value="Low tissue specificity"/>
</dbReference>
<dbReference type="MIM" id="618576">
    <property type="type" value="gene"/>
</dbReference>
<dbReference type="neXtProt" id="NX_Q96DT7"/>
<dbReference type="OpenTargets" id="ENSG00000205189"/>
<dbReference type="PharmGKB" id="PA134883318"/>
<dbReference type="VEuPathDB" id="HostDB:ENSG00000205189"/>
<dbReference type="eggNOG" id="KOG1721">
    <property type="taxonomic scope" value="Eukaryota"/>
</dbReference>
<dbReference type="GeneTree" id="ENSGT00940000157988"/>
<dbReference type="HOGENOM" id="CLU_022356_1_1_1"/>
<dbReference type="InParanoid" id="Q96DT7"/>
<dbReference type="OMA" id="ESCDQTT"/>
<dbReference type="OrthoDB" id="4845755at2759"/>
<dbReference type="PAN-GO" id="Q96DT7">
    <property type="GO annotations" value="3 GO annotations based on evolutionary models"/>
</dbReference>
<dbReference type="PhylomeDB" id="Q96DT7"/>
<dbReference type="TreeFam" id="TF330979"/>
<dbReference type="PathwayCommons" id="Q96DT7"/>
<dbReference type="SignaLink" id="Q96DT7"/>
<dbReference type="BioGRID-ORCS" id="65986">
    <property type="hits" value="43 hits in 1232 CRISPR screens"/>
</dbReference>
<dbReference type="ChiTaRS" id="ZBTB10">
    <property type="organism name" value="human"/>
</dbReference>
<dbReference type="GenomeRNAi" id="65986"/>
<dbReference type="Pharos" id="Q96DT7">
    <property type="development level" value="Tbio"/>
</dbReference>
<dbReference type="PRO" id="PR:Q96DT7"/>
<dbReference type="Proteomes" id="UP000005640">
    <property type="component" value="Chromosome 8"/>
</dbReference>
<dbReference type="RNAct" id="Q96DT7">
    <property type="molecule type" value="protein"/>
</dbReference>
<dbReference type="Bgee" id="ENSG00000205189">
    <property type="expression patterns" value="Expressed in secondary oocyte and 194 other cell types or tissues"/>
</dbReference>
<dbReference type="GO" id="GO:0000781">
    <property type="term" value="C:chromosome, telomeric region"/>
    <property type="evidence" value="ECO:0000314"/>
    <property type="project" value="ARUK-UCL"/>
</dbReference>
<dbReference type="GO" id="GO:0005654">
    <property type="term" value="C:nucleoplasm"/>
    <property type="evidence" value="ECO:0000314"/>
    <property type="project" value="HPA"/>
</dbReference>
<dbReference type="GO" id="GO:0005634">
    <property type="term" value="C:nucleus"/>
    <property type="evidence" value="ECO:0000318"/>
    <property type="project" value="GO_Central"/>
</dbReference>
<dbReference type="GO" id="GO:0001227">
    <property type="term" value="F:DNA-binding transcription repressor activity, RNA polymerase II-specific"/>
    <property type="evidence" value="ECO:0000250"/>
    <property type="project" value="ARUK-UCL"/>
</dbReference>
<dbReference type="GO" id="GO:0000977">
    <property type="term" value="F:RNA polymerase II transcription regulatory region sequence-specific DNA binding"/>
    <property type="evidence" value="ECO:0000250"/>
    <property type="project" value="ARUK-UCL"/>
</dbReference>
<dbReference type="GO" id="GO:0042162">
    <property type="term" value="F:telomeric DNA binding"/>
    <property type="evidence" value="ECO:0000314"/>
    <property type="project" value="ARUK-UCL"/>
</dbReference>
<dbReference type="GO" id="GO:0008270">
    <property type="term" value="F:zinc ion binding"/>
    <property type="evidence" value="ECO:0007669"/>
    <property type="project" value="UniProtKB-KW"/>
</dbReference>
<dbReference type="GO" id="GO:0000122">
    <property type="term" value="P:negative regulation of transcription by RNA polymerase II"/>
    <property type="evidence" value="ECO:0000250"/>
    <property type="project" value="ARUK-UCL"/>
</dbReference>
<dbReference type="GO" id="GO:0006357">
    <property type="term" value="P:regulation of transcription by RNA polymerase II"/>
    <property type="evidence" value="ECO:0000318"/>
    <property type="project" value="GO_Central"/>
</dbReference>
<dbReference type="CDD" id="cd18201">
    <property type="entry name" value="BTB_POZ_ZBTB10"/>
    <property type="match status" value="1"/>
</dbReference>
<dbReference type="FunFam" id="3.30.160.60:FF:000492">
    <property type="entry name" value="Zinc finger and BTB domain containing 10"/>
    <property type="match status" value="1"/>
</dbReference>
<dbReference type="FunFam" id="3.30.710.10:FF:000045">
    <property type="entry name" value="zinc finger and BTB domain-containing protein 10"/>
    <property type="match status" value="1"/>
</dbReference>
<dbReference type="Gene3D" id="3.30.160.60">
    <property type="entry name" value="Classic Zinc Finger"/>
    <property type="match status" value="2"/>
</dbReference>
<dbReference type="Gene3D" id="3.30.710.10">
    <property type="entry name" value="Potassium Channel Kv1.1, Chain A"/>
    <property type="match status" value="1"/>
</dbReference>
<dbReference type="InterPro" id="IPR000210">
    <property type="entry name" value="BTB/POZ_dom"/>
</dbReference>
<dbReference type="InterPro" id="IPR011333">
    <property type="entry name" value="SKP1/BTB/POZ_sf"/>
</dbReference>
<dbReference type="InterPro" id="IPR036236">
    <property type="entry name" value="Znf_C2H2_sf"/>
</dbReference>
<dbReference type="InterPro" id="IPR013087">
    <property type="entry name" value="Znf_C2H2_type"/>
</dbReference>
<dbReference type="InterPro" id="IPR050457">
    <property type="entry name" value="ZnFinger_BTB_dom_contain"/>
</dbReference>
<dbReference type="PANTHER" id="PTHR46105">
    <property type="entry name" value="AGAP004733-PA"/>
    <property type="match status" value="1"/>
</dbReference>
<dbReference type="PANTHER" id="PTHR46105:SF24">
    <property type="entry name" value="ZINC FINGER AND BTB DOMAIN CONTAINING 10"/>
    <property type="match status" value="1"/>
</dbReference>
<dbReference type="Pfam" id="PF00651">
    <property type="entry name" value="BTB"/>
    <property type="match status" value="1"/>
</dbReference>
<dbReference type="SMART" id="SM00225">
    <property type="entry name" value="BTB"/>
    <property type="match status" value="1"/>
</dbReference>
<dbReference type="SMART" id="SM00355">
    <property type="entry name" value="ZnF_C2H2"/>
    <property type="match status" value="2"/>
</dbReference>
<dbReference type="SUPFAM" id="SSF57667">
    <property type="entry name" value="beta-beta-alpha zinc fingers"/>
    <property type="match status" value="1"/>
</dbReference>
<dbReference type="SUPFAM" id="SSF54695">
    <property type="entry name" value="POZ domain"/>
    <property type="match status" value="1"/>
</dbReference>
<dbReference type="PROSITE" id="PS50097">
    <property type="entry name" value="BTB"/>
    <property type="match status" value="1"/>
</dbReference>
<dbReference type="PROSITE" id="PS00028">
    <property type="entry name" value="ZINC_FINGER_C2H2_1"/>
    <property type="match status" value="1"/>
</dbReference>
<dbReference type="PROSITE" id="PS50157">
    <property type="entry name" value="ZINC_FINGER_C2H2_2"/>
    <property type="match status" value="2"/>
</dbReference>
<comment type="function">
    <text>May be involved in transcriptional regulation.</text>
</comment>
<comment type="interaction">
    <interactant intactId="EBI-10235384">
        <id>Q96DT7</id>
    </interactant>
    <interactant intactId="EBI-372521">
        <id>Q9Y4Z0</id>
        <label>LSM4</label>
    </interactant>
    <organismsDiffer>false</organismsDiffer>
    <experiments>3</experiments>
</comment>
<comment type="interaction">
    <interactant intactId="EBI-10235384">
        <id>Q96DT7</id>
    </interactant>
    <interactant intactId="EBI-9679267">
        <id>Q70IA8</id>
        <label>MOB3C</label>
    </interactant>
    <organismsDiffer>false</organismsDiffer>
    <experiments>4</experiments>
</comment>
<comment type="interaction">
    <interactant intactId="EBI-10235384">
        <id>Q96DT7</id>
    </interactant>
    <interactant intactId="EBI-399246">
        <id>Q9UBU8</id>
        <label>MORF4L1</label>
    </interactant>
    <organismsDiffer>false</organismsDiffer>
    <experiments>3</experiments>
</comment>
<comment type="interaction">
    <interactant intactId="EBI-10235384">
        <id>Q96DT7</id>
    </interactant>
    <interactant intactId="EBI-399257">
        <id>Q15014</id>
        <label>MORF4L2</label>
    </interactant>
    <organismsDiffer>false</organismsDiffer>
    <experiments>3</experiments>
</comment>
<comment type="interaction">
    <interactant intactId="EBI-10235384">
        <id>Q96DT7</id>
    </interactant>
    <interactant intactId="EBI-740727">
        <id>Q8TAU3</id>
        <label>ZNF417</label>
    </interactant>
    <organismsDiffer>false</organismsDiffer>
    <experiments>3</experiments>
</comment>
<comment type="interaction">
    <interactant intactId="EBI-12017160">
        <id>Q96DT7-3</id>
    </interactant>
    <interactant intactId="EBI-374980">
        <id>O00311</id>
        <label>CDC7</label>
    </interactant>
    <organismsDiffer>false</organismsDiffer>
    <experiments>3</experiments>
</comment>
<comment type="interaction">
    <interactant intactId="EBI-12017160">
        <id>Q96DT7-3</id>
    </interactant>
    <interactant intactId="EBI-741885">
        <id>Q96LK0</id>
        <label>CEP19</label>
    </interactant>
    <organismsDiffer>false</organismsDiffer>
    <experiments>3</experiments>
</comment>
<comment type="interaction">
    <interactant intactId="EBI-12017160">
        <id>Q96DT7-3</id>
    </interactant>
    <interactant intactId="EBI-14148644">
        <id>O43602-2</id>
        <label>DCX</label>
    </interactant>
    <organismsDiffer>false</organismsDiffer>
    <experiments>3</experiments>
</comment>
<comment type="interaction">
    <interactant intactId="EBI-12017160">
        <id>Q96DT7-3</id>
    </interactant>
    <interactant intactId="EBI-351257">
        <id>P26196</id>
        <label>DDX6</label>
    </interactant>
    <organismsDiffer>false</organismsDiffer>
    <experiments>3</experiments>
</comment>
<comment type="interaction">
    <interactant intactId="EBI-12017160">
        <id>Q96DT7-3</id>
    </interactant>
    <interactant intactId="EBI-2339219">
        <id>Q08426</id>
        <label>EHHADH</label>
    </interactant>
    <organismsDiffer>false</organismsDiffer>
    <experiments>3</experiments>
</comment>
<comment type="interaction">
    <interactant intactId="EBI-12017160">
        <id>Q96DT7-3</id>
    </interactant>
    <interactant intactId="EBI-2869363">
        <id>Q9BYC5</id>
        <label>FUT8</label>
    </interactant>
    <organismsDiffer>false</organismsDiffer>
    <experiments>3</experiments>
</comment>
<comment type="interaction">
    <interactant intactId="EBI-12017160">
        <id>Q96DT7-3</id>
    </interactant>
    <interactant intactId="EBI-746778">
        <id>Q96A72</id>
        <label>MAGOHB</label>
    </interactant>
    <organismsDiffer>false</organismsDiffer>
    <experiments>3</experiments>
</comment>
<comment type="interaction">
    <interactant intactId="EBI-12017160">
        <id>Q96DT7-3</id>
    </interactant>
    <interactant intactId="EBI-7950783">
        <id>Q96JP2</id>
        <label>MYO15B</label>
    </interactant>
    <organismsDiffer>false</organismsDiffer>
    <experiments>3</experiments>
</comment>
<comment type="interaction">
    <interactant intactId="EBI-12017160">
        <id>Q96DT7-3</id>
    </interactant>
    <interactant intactId="EBI-10694433">
        <id>Q8N7B6-2</id>
        <label>PACRGL</label>
    </interactant>
    <organismsDiffer>false</organismsDiffer>
    <experiments>3</experiments>
</comment>
<comment type="interaction">
    <interactant intactId="EBI-12017160">
        <id>Q96DT7-3</id>
    </interactant>
    <interactant intactId="EBI-530034">
        <id>O43189</id>
        <label>PHF1</label>
    </interactant>
    <organismsDiffer>false</organismsDiffer>
    <experiments>3</experiments>
</comment>
<comment type="interaction">
    <interactant intactId="EBI-12017160">
        <id>Q96DT7-3</id>
    </interactant>
    <interactant intactId="EBI-740773">
        <id>Q96IZ5</id>
        <label>RBM41</label>
    </interactant>
    <organismsDiffer>false</organismsDiffer>
    <experiments>3</experiments>
</comment>
<comment type="interaction">
    <interactant intactId="EBI-12017160">
        <id>Q96DT7-3</id>
    </interactant>
    <interactant intactId="EBI-373337">
        <id>O76064</id>
        <label>RNF8</label>
    </interactant>
    <organismsDiffer>false</organismsDiffer>
    <experiments>3</experiments>
</comment>
<comment type="interaction">
    <interactant intactId="EBI-12017160">
        <id>Q96DT7-3</id>
    </interactant>
    <interactant intactId="EBI-2511991">
        <id>Q9Y2K6</id>
        <label>USP20</label>
    </interactant>
    <organismsDiffer>false</organismsDiffer>
    <experiments>3</experiments>
</comment>
<comment type="interaction">
    <interactant intactId="EBI-12017160">
        <id>Q96DT7-3</id>
    </interactant>
    <interactant intactId="EBI-747711">
        <id>Q68CQ4</id>
        <label>UTP25</label>
    </interactant>
    <organismsDiffer>false</organismsDiffer>
    <experiments>3</experiments>
</comment>
<comment type="interaction">
    <interactant intactId="EBI-12017160">
        <id>Q96DT7-3</id>
    </interactant>
    <interactant intactId="EBI-740727">
        <id>Q8TAU3</id>
        <label>ZNF417</label>
    </interactant>
    <organismsDiffer>false</organismsDiffer>
    <experiments>3</experiments>
</comment>
<comment type="subcellular location">
    <subcellularLocation>
        <location evidence="8">Nucleus</location>
    </subcellularLocation>
</comment>
<comment type="alternative products">
    <event type="alternative splicing"/>
    <isoform>
        <id>Q96DT7-1</id>
        <name>1</name>
        <sequence type="displayed"/>
    </isoform>
    <isoform>
        <id>Q96DT7-2</id>
        <name>2</name>
        <sequence type="described" ref="VSP_040319"/>
    </isoform>
    <isoform>
        <id>Q96DT7-3</id>
        <name>3</name>
        <sequence type="described" ref="VSP_040317"/>
    </isoform>
    <isoform>
        <id>Q96DT7-4</id>
        <name>4</name>
        <sequence type="described" ref="VSP_040316 VSP_040318"/>
    </isoform>
</comment>
<sequence length="871" mass="94894">MSFSEMNRRTLAFRGGGLVTASGGGSTNNNAGGEASAWPPQPQPRQPPPPAPPALQPPNGRGADEEVELEGLEPQDLEASAGPAAGAAEEAKELLLPQDAGGPTSLGGGAGGPLLAERNRRTLAFRGGGGGGLGNNGSSRGRPETSVWPLRHFNGRGPATVDLELDALEGKELMQDGASLSDSTEDEEEGASLGDGSGAEGGSCSSSRRSGGDGGDEVEGSGVGAGEGETVQHFPLARPKSLMQKLQCSFQTSWLKDFPWLRYSKDTGLMSCGWCQKTPADGGSVDLPPVGHDELSRGTRNYKKTLLLRHHVSTEHKLHEANAQESEIPSEEGYCDFNSRPNENSYCYQLLRQLNEQRKKGILCDVSIVVSGKIFKAHKNILVAGSRFFKTLYCFSNKESPNQNNTTHLDIAAVQGFSVILDFLYSGNLVLTSQNAIEVMTVASYLQMSEVVQTCRNFIKDALNISIKSEAPESVVVDYNNRKPVNRDGLSSSRDQKIASFWATRNLTNLASNVKIENDGCNVDEGQIENYQMNDSSWVQDGSPEMAENESEGQTKVFIWNNMGSQGIQETGKTRRKNQTTKRFIYNIPPNNETNLEDCSVMQPPVAYPEENTLLIKEEPDLDGALLSGPDGDRNVNANLLAEAGTSQDGGDAGTSHDFKYGLMPGPSNDFKYGLIPGTSNDFKYGLIPGASNDFKYGLLPESWPKQETWENGESSLIMNKLKCPHCSYVAKYRRTLKRHLLIHTGVRSFSCDICGKLFTRREHVKRHSLVHKKDKKYKCMVCKKIFMLAASVGIRHGSRRYGVCVDCADKSQPGGQEGVDQGQDTEFPRDEEYEENEVGEADEELVDDGEDQNDPSRWDESGEVCMSLDD</sequence>
<accession>Q96DT7</accession>
<accession>A4FVD0</accession>
<accession>Q86W96</accession>
<accession>Q8IXI9</accession>
<accession>Q96MH9</accession>
<feature type="chain" id="PRO_0000047725" description="Zinc finger and BTB domain-containing protein 10">
    <location>
        <begin position="1"/>
        <end position="871"/>
    </location>
</feature>
<feature type="domain" description="BTB" evidence="1">
    <location>
        <begin position="364"/>
        <end position="433"/>
    </location>
</feature>
<feature type="zinc finger region" description="C2H2-type 1" evidence="2">
    <location>
        <begin position="722"/>
        <end position="744"/>
    </location>
</feature>
<feature type="zinc finger region" description="C2H2-type 2" evidence="2">
    <location>
        <begin position="750"/>
        <end position="772"/>
    </location>
</feature>
<feature type="region of interest" description="Disordered" evidence="3">
    <location>
        <begin position="1"/>
        <end position="156"/>
    </location>
</feature>
<feature type="region of interest" description="Disordered" evidence="3">
    <location>
        <begin position="177"/>
        <end position="228"/>
    </location>
</feature>
<feature type="region of interest" description="Disordered" evidence="3">
    <location>
        <begin position="812"/>
        <end position="871"/>
    </location>
</feature>
<feature type="compositionally biased region" description="Gly residues" evidence="3">
    <location>
        <begin position="14"/>
        <end position="26"/>
    </location>
</feature>
<feature type="compositionally biased region" description="Low complexity" evidence="3">
    <location>
        <begin position="27"/>
        <end position="37"/>
    </location>
</feature>
<feature type="compositionally biased region" description="Pro residues" evidence="3">
    <location>
        <begin position="39"/>
        <end position="56"/>
    </location>
</feature>
<feature type="compositionally biased region" description="Acidic residues" evidence="3">
    <location>
        <begin position="65"/>
        <end position="76"/>
    </location>
</feature>
<feature type="compositionally biased region" description="Low complexity" evidence="3">
    <location>
        <begin position="77"/>
        <end position="103"/>
    </location>
</feature>
<feature type="compositionally biased region" description="Gly residues" evidence="3">
    <location>
        <begin position="126"/>
        <end position="135"/>
    </location>
</feature>
<feature type="compositionally biased region" description="Acidic residues" evidence="3">
    <location>
        <begin position="830"/>
        <end position="854"/>
    </location>
</feature>
<feature type="modified residue" description="Omega-N-methylarginine" evidence="12">
    <location>
        <position position="126"/>
    </location>
</feature>
<feature type="modified residue" description="Phosphoserine" evidence="10 11">
    <location>
        <position position="210"/>
    </location>
</feature>
<feature type="modified residue" description="Phosphoserine" evidence="9">
    <location>
        <position position="565"/>
    </location>
</feature>
<feature type="cross-link" description="Glycyl lysine isopeptide (Lys-Gly) (interchain with G-Cter in SUMO2)" evidence="16">
    <location>
        <position position="245"/>
    </location>
</feature>
<feature type="cross-link" description="Glycyl lysine isopeptide (Lys-Gly) (interchain with G-Cter in SUMO2)" evidence="13 14 15 16">
    <location>
        <position position="468"/>
    </location>
</feature>
<feature type="cross-link" description="Glycyl lysine isopeptide (Lys-Gly) (interchain with G-Cter in SUMO2)" evidence="16">
    <location>
        <position position="483"/>
    </location>
</feature>
<feature type="cross-link" description="Glycyl lysine isopeptide (Lys-Gly) (interchain with G-Cter in SUMO2)" evidence="16">
    <location>
        <position position="497"/>
    </location>
</feature>
<feature type="cross-link" description="Glycyl lysine isopeptide (Lys-Gly) (interchain with G-Cter in SUMO2)" evidence="16">
    <location>
        <position position="573"/>
    </location>
</feature>
<feature type="cross-link" description="Glycyl lysine isopeptide (Lys-Gly) (interchain with G-Cter in SUMO2)" evidence="16">
    <location>
        <position position="672"/>
    </location>
</feature>
<feature type="cross-link" description="Glycyl lysine isopeptide (Lys-Gly) (interchain with G-Cter in SUMO2)" evidence="15 16">
    <location>
        <position position="684"/>
    </location>
</feature>
<feature type="cross-link" description="Glycyl lysine isopeptide (Lys-Gly) (interchain with G-Cter in SUMO2)" evidence="16">
    <location>
        <position position="696"/>
    </location>
</feature>
<feature type="cross-link" description="Glycyl lysine isopeptide (Lys-Gly) (interchain with G-Cter in SUMO2)" evidence="16">
    <location>
        <position position="706"/>
    </location>
</feature>
<feature type="splice variant" id="VSP_040316" description="In isoform 4." evidence="5">
    <location>
        <begin position="1"/>
        <end position="292"/>
    </location>
</feature>
<feature type="splice variant" id="VSP_040317" description="In isoform 3." evidence="6">
    <location>
        <begin position="1"/>
        <end position="173"/>
    </location>
</feature>
<feature type="splice variant" id="VSP_040318" description="In isoform 4." evidence="5">
    <original>DELSRGTRNYKKTLLLRHHVSTEHKLHEANAQ</original>
    <variation>MTRLERSSHRTVICKVPGELVAREGKCASRAR</variation>
    <location>
        <begin position="293"/>
        <end position="324"/>
    </location>
</feature>
<feature type="splice variant" id="VSP_040319" description="In isoform 2." evidence="7">
    <location>
        <begin position="665"/>
        <end position="688"/>
    </location>
</feature>
<feature type="sequence variant" id="VAR_018384" description="In dbSNP:rs591989." evidence="4">
    <original>P</original>
    <variation>T</variation>
    <location>
        <position position="50"/>
    </location>
</feature>
<feature type="sequence variant" id="VAR_018385" description="In dbSNP:rs593747." evidence="4">
    <original>M</original>
    <variation>I</variation>
    <location>
        <position position="174"/>
    </location>
</feature>
<feature type="sequence conflict" description="In Ref. 1; CAC40989." evidence="8" ref="1">
    <original>Q</original>
    <variation>P</variation>
    <location>
        <position position="324"/>
    </location>
</feature>
<feature type="sequence conflict" description="In Ref. 1; CAC40989." evidence="8" ref="1">
    <original>C</original>
    <variation>W</variation>
    <location>
        <position position="335"/>
    </location>
</feature>
<feature type="sequence conflict" description="In Ref. 1; CAC40989." evidence="8" ref="1">
    <original>S</original>
    <variation>R</variation>
    <location>
        <position position="339"/>
    </location>
</feature>
<feature type="strand" evidence="18">
    <location>
        <begin position="725"/>
        <end position="728"/>
    </location>
</feature>
<feature type="helix" evidence="17">
    <location>
        <begin position="734"/>
        <end position="741"/>
    </location>
</feature>
<feature type="strand" evidence="17">
    <location>
        <begin position="744"/>
        <end position="746"/>
    </location>
</feature>
<feature type="strand" evidence="17">
    <location>
        <begin position="749"/>
        <end position="751"/>
    </location>
</feature>
<feature type="turn" evidence="17">
    <location>
        <begin position="753"/>
        <end position="755"/>
    </location>
</feature>
<feature type="strand" evidence="17">
    <location>
        <begin position="758"/>
        <end position="761"/>
    </location>
</feature>
<feature type="helix" evidence="17">
    <location>
        <begin position="762"/>
        <end position="768"/>
    </location>
</feature>
<feature type="helix" evidence="17">
    <location>
        <begin position="769"/>
        <end position="771"/>
    </location>
</feature>
<gene>
    <name type="primary">ZBTB10</name>
    <name type="synonym">RINZF</name>
    <name type="synonym">RINZFC</name>
</gene>
<keyword id="KW-0002">3D-structure</keyword>
<keyword id="KW-0025">Alternative splicing</keyword>
<keyword id="KW-0238">DNA-binding</keyword>
<keyword id="KW-1017">Isopeptide bond</keyword>
<keyword id="KW-0479">Metal-binding</keyword>
<keyword id="KW-0488">Methylation</keyword>
<keyword id="KW-0539">Nucleus</keyword>
<keyword id="KW-0597">Phosphoprotein</keyword>
<keyword id="KW-1267">Proteomics identification</keyword>
<keyword id="KW-1185">Reference proteome</keyword>
<keyword id="KW-0677">Repeat</keyword>
<keyword id="KW-0804">Transcription</keyword>
<keyword id="KW-0805">Transcription regulation</keyword>
<keyword id="KW-0832">Ubl conjugation</keyword>
<keyword id="KW-0862">Zinc</keyword>
<keyword id="KW-0863">Zinc-finger</keyword>
<protein>
    <recommendedName>
        <fullName>Zinc finger and BTB domain-containing protein 10</fullName>
    </recommendedName>
    <alternativeName>
        <fullName>Zinc finger protein RIN ZF</fullName>
    </alternativeName>
</protein>
<name>ZBT10_HUMAN</name>
<proteinExistence type="evidence at protein level"/>
<reference key="1">
    <citation type="submission" date="2001-06" db="EMBL/GenBank/DDBJ databases">
        <authorList>
            <person name="Kashuba V.I."/>
            <person name="Protopopov A.I."/>
            <person name="Zabarovsky E.R."/>
        </authorList>
    </citation>
    <scope>NUCLEOTIDE SEQUENCE [MRNA] (ISOFORM 2)</scope>
    <scope>VARIANTS THR-50 AND ILE-174</scope>
    <source>
        <tissue>Brain</tissue>
    </source>
</reference>
<reference key="2">
    <citation type="thesis" date="2002" institute="Novosibirsk Institute of Cytology and Genetics" country="Russia">
        <title>Identification of four genes on human chromosome 3 homologous to the known genes on other chromosomes by in silico analysis.</title>
        <authorList>
            <person name="Rakhmanaliev E.R."/>
        </authorList>
    </citation>
    <scope>NUCLEOTIDE SEQUENCE [GENOMIC DNA] (ISOFORM 2)</scope>
</reference>
<reference key="3">
    <citation type="journal article" date="2004" name="Nat. Genet.">
        <title>Complete sequencing and characterization of 21,243 full-length human cDNAs.</title>
        <authorList>
            <person name="Ota T."/>
            <person name="Suzuki Y."/>
            <person name="Nishikawa T."/>
            <person name="Otsuki T."/>
            <person name="Sugiyama T."/>
            <person name="Irie R."/>
            <person name="Wakamatsu A."/>
            <person name="Hayashi K."/>
            <person name="Sato H."/>
            <person name="Nagai K."/>
            <person name="Kimura K."/>
            <person name="Makita H."/>
            <person name="Sekine M."/>
            <person name="Obayashi M."/>
            <person name="Nishi T."/>
            <person name="Shibahara T."/>
            <person name="Tanaka T."/>
            <person name="Ishii S."/>
            <person name="Yamamoto J."/>
            <person name="Saito K."/>
            <person name="Kawai Y."/>
            <person name="Isono Y."/>
            <person name="Nakamura Y."/>
            <person name="Nagahari K."/>
            <person name="Murakami K."/>
            <person name="Yasuda T."/>
            <person name="Iwayanagi T."/>
            <person name="Wagatsuma M."/>
            <person name="Shiratori A."/>
            <person name="Sudo H."/>
            <person name="Hosoiri T."/>
            <person name="Kaku Y."/>
            <person name="Kodaira H."/>
            <person name="Kondo H."/>
            <person name="Sugawara M."/>
            <person name="Takahashi M."/>
            <person name="Kanda K."/>
            <person name="Yokoi T."/>
            <person name="Furuya T."/>
            <person name="Kikkawa E."/>
            <person name="Omura Y."/>
            <person name="Abe K."/>
            <person name="Kamihara K."/>
            <person name="Katsuta N."/>
            <person name="Sato K."/>
            <person name="Tanikawa M."/>
            <person name="Yamazaki M."/>
            <person name="Ninomiya K."/>
            <person name="Ishibashi T."/>
            <person name="Yamashita H."/>
            <person name="Murakawa K."/>
            <person name="Fujimori K."/>
            <person name="Tanai H."/>
            <person name="Kimata M."/>
            <person name="Watanabe M."/>
            <person name="Hiraoka S."/>
            <person name="Chiba Y."/>
            <person name="Ishida S."/>
            <person name="Ono Y."/>
            <person name="Takiguchi S."/>
            <person name="Watanabe S."/>
            <person name="Yosida M."/>
            <person name="Hotuta T."/>
            <person name="Kusano J."/>
            <person name="Kanehori K."/>
            <person name="Takahashi-Fujii A."/>
            <person name="Hara H."/>
            <person name="Tanase T.-O."/>
            <person name="Nomura Y."/>
            <person name="Togiya S."/>
            <person name="Komai F."/>
            <person name="Hara R."/>
            <person name="Takeuchi K."/>
            <person name="Arita M."/>
            <person name="Imose N."/>
            <person name="Musashino K."/>
            <person name="Yuuki H."/>
            <person name="Oshima A."/>
            <person name="Sasaki N."/>
            <person name="Aotsuka S."/>
            <person name="Yoshikawa Y."/>
            <person name="Matsunawa H."/>
            <person name="Ichihara T."/>
            <person name="Shiohata N."/>
            <person name="Sano S."/>
            <person name="Moriya S."/>
            <person name="Momiyama H."/>
            <person name="Satoh N."/>
            <person name="Takami S."/>
            <person name="Terashima Y."/>
            <person name="Suzuki O."/>
            <person name="Nakagawa S."/>
            <person name="Senoh A."/>
            <person name="Mizoguchi H."/>
            <person name="Goto Y."/>
            <person name="Shimizu F."/>
            <person name="Wakebe H."/>
            <person name="Hishigaki H."/>
            <person name="Watanabe T."/>
            <person name="Sugiyama A."/>
            <person name="Takemoto M."/>
            <person name="Kawakami B."/>
            <person name="Yamazaki M."/>
            <person name="Watanabe K."/>
            <person name="Kumagai A."/>
            <person name="Itakura S."/>
            <person name="Fukuzumi Y."/>
            <person name="Fujimori Y."/>
            <person name="Komiyama M."/>
            <person name="Tashiro H."/>
            <person name="Tanigami A."/>
            <person name="Fujiwara T."/>
            <person name="Ono T."/>
            <person name="Yamada K."/>
            <person name="Fujii Y."/>
            <person name="Ozaki K."/>
            <person name="Hirao M."/>
            <person name="Ohmori Y."/>
            <person name="Kawabata A."/>
            <person name="Hikiji T."/>
            <person name="Kobatake N."/>
            <person name="Inagaki H."/>
            <person name="Ikema Y."/>
            <person name="Okamoto S."/>
            <person name="Okitani R."/>
            <person name="Kawakami T."/>
            <person name="Noguchi S."/>
            <person name="Itoh T."/>
            <person name="Shigeta K."/>
            <person name="Senba T."/>
            <person name="Matsumura K."/>
            <person name="Nakajima Y."/>
            <person name="Mizuno T."/>
            <person name="Morinaga M."/>
            <person name="Sasaki M."/>
            <person name="Togashi T."/>
            <person name="Oyama M."/>
            <person name="Hata H."/>
            <person name="Watanabe M."/>
            <person name="Komatsu T."/>
            <person name="Mizushima-Sugano J."/>
            <person name="Satoh T."/>
            <person name="Shirai Y."/>
            <person name="Takahashi Y."/>
            <person name="Nakagawa K."/>
            <person name="Okumura K."/>
            <person name="Nagase T."/>
            <person name="Nomura N."/>
            <person name="Kikuchi H."/>
            <person name="Masuho Y."/>
            <person name="Yamashita R."/>
            <person name="Nakai K."/>
            <person name="Yada T."/>
            <person name="Nakamura Y."/>
            <person name="Ohara O."/>
            <person name="Isogai T."/>
            <person name="Sugano S."/>
        </authorList>
    </citation>
    <scope>NUCLEOTIDE SEQUENCE [LARGE SCALE MRNA] (ISOFORM 4)</scope>
    <source>
        <tissue>Prostate</tissue>
    </source>
</reference>
<reference key="4">
    <citation type="journal article" date="2006" name="Nature">
        <title>DNA sequence and analysis of human chromosome 8.</title>
        <authorList>
            <person name="Nusbaum C."/>
            <person name="Mikkelsen T.S."/>
            <person name="Zody M.C."/>
            <person name="Asakawa S."/>
            <person name="Taudien S."/>
            <person name="Garber M."/>
            <person name="Kodira C.D."/>
            <person name="Schueler M.G."/>
            <person name="Shimizu A."/>
            <person name="Whittaker C.A."/>
            <person name="Chang J.L."/>
            <person name="Cuomo C.A."/>
            <person name="Dewar K."/>
            <person name="FitzGerald M.G."/>
            <person name="Yang X."/>
            <person name="Allen N.R."/>
            <person name="Anderson S."/>
            <person name="Asakawa T."/>
            <person name="Blechschmidt K."/>
            <person name="Bloom T."/>
            <person name="Borowsky M.L."/>
            <person name="Butler J."/>
            <person name="Cook A."/>
            <person name="Corum B."/>
            <person name="DeArellano K."/>
            <person name="DeCaprio D."/>
            <person name="Dooley K.T."/>
            <person name="Dorris L. III"/>
            <person name="Engels R."/>
            <person name="Gloeckner G."/>
            <person name="Hafez N."/>
            <person name="Hagopian D.S."/>
            <person name="Hall J.L."/>
            <person name="Ishikawa S.K."/>
            <person name="Jaffe D.B."/>
            <person name="Kamat A."/>
            <person name="Kudoh J."/>
            <person name="Lehmann R."/>
            <person name="Lokitsang T."/>
            <person name="Macdonald P."/>
            <person name="Major J.E."/>
            <person name="Matthews C.D."/>
            <person name="Mauceli E."/>
            <person name="Menzel U."/>
            <person name="Mihalev A.H."/>
            <person name="Minoshima S."/>
            <person name="Murayama Y."/>
            <person name="Naylor J.W."/>
            <person name="Nicol R."/>
            <person name="Nguyen C."/>
            <person name="O'Leary S.B."/>
            <person name="O'Neill K."/>
            <person name="Parker S.C.J."/>
            <person name="Polley A."/>
            <person name="Raymond C.K."/>
            <person name="Reichwald K."/>
            <person name="Rodriguez J."/>
            <person name="Sasaki T."/>
            <person name="Schilhabel M."/>
            <person name="Siddiqui R."/>
            <person name="Smith C.L."/>
            <person name="Sneddon T.P."/>
            <person name="Talamas J.A."/>
            <person name="Tenzin P."/>
            <person name="Topham K."/>
            <person name="Venkataraman V."/>
            <person name="Wen G."/>
            <person name="Yamazaki S."/>
            <person name="Young S.K."/>
            <person name="Zeng Q."/>
            <person name="Zimmer A.R."/>
            <person name="Rosenthal A."/>
            <person name="Birren B.W."/>
            <person name="Platzer M."/>
            <person name="Shimizu N."/>
            <person name="Lander E.S."/>
        </authorList>
    </citation>
    <scope>NUCLEOTIDE SEQUENCE [LARGE SCALE GENOMIC DNA]</scope>
</reference>
<reference key="5">
    <citation type="journal article" date="2004" name="Genome Res.">
        <title>The status, quality, and expansion of the NIH full-length cDNA project: the Mammalian Gene Collection (MGC).</title>
        <authorList>
            <consortium name="The MGC Project Team"/>
        </authorList>
    </citation>
    <scope>NUCLEOTIDE SEQUENCE [LARGE SCALE MRNA] (ISOFORM 3)</scope>
    <scope>NUCLEOTIDE SEQUENCE [LARGE SCALE MRNA] OF 368-871 (ISOFORMS 1/3/4)</scope>
    <source>
        <tissue>Testis</tissue>
    </source>
</reference>
<reference key="6">
    <citation type="journal article" date="2007" name="Science">
        <title>ATM and ATR substrate analysis reveals extensive protein networks responsive to DNA damage.</title>
        <authorList>
            <person name="Matsuoka S."/>
            <person name="Ballif B.A."/>
            <person name="Smogorzewska A."/>
            <person name="McDonald E.R. III"/>
            <person name="Hurov K.E."/>
            <person name="Luo J."/>
            <person name="Bakalarski C.E."/>
            <person name="Zhao Z."/>
            <person name="Solimini N."/>
            <person name="Lerenthal Y."/>
            <person name="Shiloh Y."/>
            <person name="Gygi S.P."/>
            <person name="Elledge S.J."/>
        </authorList>
    </citation>
    <scope>PHOSPHORYLATION [LARGE SCALE ANALYSIS] AT SER-565</scope>
    <scope>IDENTIFICATION BY MASS SPECTROMETRY [LARGE SCALE ANALYSIS]</scope>
    <source>
        <tissue>Embryonic kidney</tissue>
    </source>
</reference>
<reference key="7">
    <citation type="journal article" date="2008" name="Proc. Natl. Acad. Sci. U.S.A.">
        <title>A quantitative atlas of mitotic phosphorylation.</title>
        <authorList>
            <person name="Dephoure N."/>
            <person name="Zhou C."/>
            <person name="Villen J."/>
            <person name="Beausoleil S.A."/>
            <person name="Bakalarski C.E."/>
            <person name="Elledge S.J."/>
            <person name="Gygi S.P."/>
        </authorList>
    </citation>
    <scope>PHOSPHORYLATION [LARGE SCALE ANALYSIS] AT SER-210</scope>
    <scope>IDENTIFICATION BY MASS SPECTROMETRY [LARGE SCALE ANALYSIS]</scope>
    <source>
        <tissue>Cervix carcinoma</tissue>
    </source>
</reference>
<reference key="8">
    <citation type="journal article" date="2011" name="BMC Syst. Biol.">
        <title>Initial characterization of the human central proteome.</title>
        <authorList>
            <person name="Burkard T.R."/>
            <person name="Planyavsky M."/>
            <person name="Kaupe I."/>
            <person name="Breitwieser F.P."/>
            <person name="Buerckstuemmer T."/>
            <person name="Bennett K.L."/>
            <person name="Superti-Furga G."/>
            <person name="Colinge J."/>
        </authorList>
    </citation>
    <scope>IDENTIFICATION BY MASS SPECTROMETRY [LARGE SCALE ANALYSIS]</scope>
</reference>
<reference key="9">
    <citation type="journal article" date="2011" name="Sci. Signal.">
        <title>System-wide temporal characterization of the proteome and phosphoproteome of human embryonic stem cell differentiation.</title>
        <authorList>
            <person name="Rigbolt K.T."/>
            <person name="Prokhorova T.A."/>
            <person name="Akimov V."/>
            <person name="Henningsen J."/>
            <person name="Johansen P.T."/>
            <person name="Kratchmarova I."/>
            <person name="Kassem M."/>
            <person name="Mann M."/>
            <person name="Olsen J.V."/>
            <person name="Blagoev B."/>
        </authorList>
    </citation>
    <scope>PHOSPHORYLATION [LARGE SCALE ANALYSIS] AT SER-210</scope>
    <scope>IDENTIFICATION BY MASS SPECTROMETRY [LARGE SCALE ANALYSIS]</scope>
</reference>
<reference key="10">
    <citation type="journal article" date="2014" name="Mol. Cell. Proteomics">
        <title>Immunoaffinity enrichment and mass spectrometry analysis of protein methylation.</title>
        <authorList>
            <person name="Guo A."/>
            <person name="Gu H."/>
            <person name="Zhou J."/>
            <person name="Mulhern D."/>
            <person name="Wang Y."/>
            <person name="Lee K.A."/>
            <person name="Yang V."/>
            <person name="Aguiar M."/>
            <person name="Kornhauser J."/>
            <person name="Jia X."/>
            <person name="Ren J."/>
            <person name="Beausoleil S.A."/>
            <person name="Silva J.C."/>
            <person name="Vemulapalli V."/>
            <person name="Bedford M.T."/>
            <person name="Comb M.J."/>
        </authorList>
    </citation>
    <scope>METHYLATION [LARGE SCALE ANALYSIS] AT ARG-126</scope>
    <scope>IDENTIFICATION BY MASS SPECTROMETRY [LARGE SCALE ANALYSIS]</scope>
    <source>
        <tissue>Colon carcinoma</tissue>
    </source>
</reference>
<reference key="11">
    <citation type="journal article" date="2014" name="Nat. Struct. Mol. Biol.">
        <title>Uncovering global SUMOylation signaling networks in a site-specific manner.</title>
        <authorList>
            <person name="Hendriks I.A."/>
            <person name="D'Souza R.C."/>
            <person name="Yang B."/>
            <person name="Verlaan-de Vries M."/>
            <person name="Mann M."/>
            <person name="Vertegaal A.C."/>
        </authorList>
    </citation>
    <scope>SUMOYLATION [LARGE SCALE ANALYSIS] AT LYS-468</scope>
    <scope>IDENTIFICATION BY MASS SPECTROMETRY [LARGE SCALE ANALYSIS]</scope>
</reference>
<reference key="12">
    <citation type="journal article" date="2015" name="Cell Rep.">
        <title>SUMO-2 orchestrates chromatin modifiers in response to DNA damage.</title>
        <authorList>
            <person name="Hendriks I.A."/>
            <person name="Treffers L.W."/>
            <person name="Verlaan-de Vries M."/>
            <person name="Olsen J.V."/>
            <person name="Vertegaal A.C."/>
        </authorList>
    </citation>
    <scope>SUMOYLATION [LARGE SCALE ANALYSIS] AT LYS-468 AND LYS-684</scope>
    <scope>IDENTIFICATION BY MASS SPECTROMETRY [LARGE SCALE ANALYSIS]</scope>
</reference>
<reference key="13">
    <citation type="journal article" date="2015" name="Mol. Cell. Proteomics">
        <title>System-wide analysis of SUMOylation dynamics in response to replication stress reveals novel small ubiquitin-like modified target proteins and acceptor lysines relevant for genome stability.</title>
        <authorList>
            <person name="Xiao Z."/>
            <person name="Chang J.G."/>
            <person name="Hendriks I.A."/>
            <person name="Sigurdsson J.O."/>
            <person name="Olsen J.V."/>
            <person name="Vertegaal A.C."/>
        </authorList>
    </citation>
    <scope>SUMOYLATION [LARGE SCALE ANALYSIS] AT LYS-468</scope>
    <scope>IDENTIFICATION BY MASS SPECTROMETRY [LARGE SCALE ANALYSIS]</scope>
</reference>
<reference key="14">
    <citation type="journal article" date="2017" name="Nat. Struct. Mol. Biol.">
        <title>Site-specific mapping of the human SUMO proteome reveals co-modification with phosphorylation.</title>
        <authorList>
            <person name="Hendriks I.A."/>
            <person name="Lyon D."/>
            <person name="Young C."/>
            <person name="Jensen L.J."/>
            <person name="Vertegaal A.C."/>
            <person name="Nielsen M.L."/>
        </authorList>
    </citation>
    <scope>SUMOYLATION [LARGE SCALE ANALYSIS] AT LYS-245; LYS-468; LYS-483; LYS-497; LYS-573; LYS-672; LYS-684; LYS-696 AND LYS-706</scope>
    <scope>IDENTIFICATION BY MASS SPECTROMETRY [LARGE SCALE ANALYSIS]</scope>
</reference>